<protein>
    <recommendedName>
        <fullName>Alpha-internexin</fullName>
        <shortName>Alpha-Inx</shortName>
    </recommendedName>
</protein>
<feature type="chain" id="PRO_0000063785" description="Alpha-internexin">
    <location>
        <begin position="1"/>
        <end position="505"/>
    </location>
</feature>
<feature type="domain" description="IF rod" evidence="4">
    <location>
        <begin position="94"/>
        <end position="407"/>
    </location>
</feature>
<feature type="region of interest" description="Head">
    <location>
        <begin position="1"/>
        <end position="87"/>
    </location>
</feature>
<feature type="region of interest" description="Coil 1A">
    <location>
        <begin position="88"/>
        <end position="129"/>
    </location>
</feature>
<feature type="region of interest" description="Linker 1">
    <location>
        <begin position="130"/>
        <end position="142"/>
    </location>
</feature>
<feature type="region of interest" description="Coil 1B">
    <location>
        <begin position="143"/>
        <end position="238"/>
    </location>
</feature>
<feature type="region of interest" description="Linker 2">
    <location>
        <begin position="239"/>
        <end position="262"/>
    </location>
</feature>
<feature type="region of interest" description="Coil 2">
    <location>
        <begin position="263"/>
        <end position="408"/>
    </location>
</feature>
<feature type="region of interest" description="Tail">
    <location>
        <begin position="409"/>
        <end position="505"/>
    </location>
</feature>
<feature type="region of interest" description="Disordered" evidence="5">
    <location>
        <begin position="438"/>
        <end position="505"/>
    </location>
</feature>
<feature type="compositionally biased region" description="Low complexity" evidence="5">
    <location>
        <begin position="495"/>
        <end position="505"/>
    </location>
</feature>
<feature type="modified residue" description="Phosphoserine" evidence="2">
    <location>
        <position position="72"/>
    </location>
</feature>
<feature type="modified residue" description="Phosphoserine" evidence="2">
    <location>
        <position position="219"/>
    </location>
</feature>
<feature type="modified residue" description="N6-acetyllysine" evidence="3">
    <location>
        <position position="290"/>
    </location>
</feature>
<feature type="modified residue" description="Phosphoserine" evidence="8">
    <location>
        <position position="335"/>
    </location>
</feature>
<feature type="modified residue" description="Phosphoserine" evidence="8">
    <location>
        <position position="474"/>
    </location>
</feature>
<feature type="modified residue" description="Phosphoserine" evidence="3">
    <location>
        <position position="502"/>
    </location>
</feature>
<feature type="sequence conflict" description="In Ref. 1; CAA36264." evidence="7" ref="1">
    <original>AQ</original>
    <variation>GE</variation>
    <location>
        <begin position="152"/>
        <end position="153"/>
    </location>
</feature>
<feature type="sequence conflict" description="In Ref. 1; AA sequence." evidence="7" ref="1">
    <location>
        <begin position="239"/>
        <end position="242"/>
    </location>
</feature>
<feature type="sequence conflict" description="In Ref. 1; AA sequence." evidence="7" ref="1">
    <location>
        <position position="458"/>
    </location>
</feature>
<keyword id="KW-0007">Acetylation</keyword>
<keyword id="KW-0175">Coiled coil</keyword>
<keyword id="KW-0217">Developmental protein</keyword>
<keyword id="KW-0221">Differentiation</keyword>
<keyword id="KW-0903">Direct protein sequencing</keyword>
<keyword id="KW-0325">Glycoprotein</keyword>
<keyword id="KW-0403">Intermediate filament</keyword>
<keyword id="KW-0524">Neurogenesis</keyword>
<keyword id="KW-0597">Phosphoprotein</keyword>
<keyword id="KW-1185">Reference proteome</keyword>
<accession>P23565</accession>
<proteinExistence type="evidence at protein level"/>
<name>AINX_RAT</name>
<reference key="1">
    <citation type="journal article" date="1990" name="EMBO J.">
        <title>The predicted amino acid sequence of alpha-internexin is that of a novel neuronal intermediate filament protein.</title>
        <authorList>
            <person name="Fliegner K.-H."/>
            <person name="Ching G.Y."/>
            <person name="Liem R.K.H."/>
        </authorList>
    </citation>
    <scope>NUCLEOTIDE SEQUENCE [MRNA]</scope>
    <scope>PARTIAL PROTEIN SEQUENCE</scope>
    <source>
        <tissue>Brain</tissue>
    </source>
</reference>
<reference key="2">
    <citation type="journal article" date="1991" name="J. Biol. Chem.">
        <title>Structure of the gene for the neuronal intermediate filament protein alpha-internexin and functional analysis of its promoter.</title>
        <authorList>
            <person name="Ching G.Y."/>
            <person name="Liem R.K.H."/>
        </authorList>
    </citation>
    <scope>NUCLEOTIDE SEQUENCE [GENOMIC DNA]</scope>
</reference>
<reference key="3">
    <citation type="submission" date="2007-07" db="UniProtKB">
        <authorList>
            <person name="Lubec G."/>
            <person name="Afjehi-Sadat L."/>
            <person name="Chen W.-Q."/>
            <person name="Kang S.U."/>
        </authorList>
    </citation>
    <scope>PROTEIN SEQUENCE OF 46-83; 92-104; 121-130; 152-161; 216-228; 270-278; 291-300; 323-330; 339-366; 387-397; 399-430 AND 439-447</scope>
    <scope>IDENTIFICATION BY MASS SPECTROMETRY</scope>
    <source>
        <strain>Sprague-Dawley</strain>
        <tissue>Brain</tissue>
        <tissue>Hippocampus</tissue>
        <tissue>Spinal cord</tissue>
    </source>
</reference>
<reference key="4">
    <citation type="journal article" date="1997" name="J. Biol. Chem.">
        <title>Heterodimeric associations between neuronal intermediate filament proteins.</title>
        <authorList>
            <person name="Athlan E.S."/>
            <person name="Mushynski W.E."/>
        </authorList>
    </citation>
    <scope>SUBUNIT</scope>
    <scope>INTERACTION WITH NEFL; NEFM AND NEFH</scope>
    <scope>TISSUE SPECIFICITY</scope>
</reference>
<reference key="5">
    <citation type="journal article" date="2012" name="Nat. Commun.">
        <title>Quantitative maps of protein phosphorylation sites across 14 different rat organs and tissues.</title>
        <authorList>
            <person name="Lundby A."/>
            <person name="Secher A."/>
            <person name="Lage K."/>
            <person name="Nordsborg N.B."/>
            <person name="Dmytriyev A."/>
            <person name="Lundby C."/>
            <person name="Olsen J.V."/>
        </authorList>
    </citation>
    <scope>PHOSPHORYLATION [LARGE SCALE ANALYSIS] AT SER-335 AND SER-474</scope>
    <scope>IDENTIFICATION BY MASS SPECTROMETRY [LARGE SCALE ANALYSIS]</scope>
</reference>
<sequence length="505" mass="56115">MSFGSEHYLCSASSYRKVFGDGSRLSARLSGPGASGSFRSQSLSRSNVASTAACSSASSLGLGLAYRRLPASDGLDLSQAAARTNEYKIIRTNEKEQLQGLNDRFAVFIEKVHQLETQNRALEAELAALRQRHAEPSRVGELFQRELRELRAQLEEASSARAQALLERDGLAEEVQRLRARCEEESRGREGAERALKAQQRDVDGATLARLDLEKKVESLLDELAFVRQVHDEEVAELLATLQASSQAAAEVDVAVAKPDLTSALREIRAQYESLAAKNLQSAEEWYKSKFANLNEQAARSTEAIRASREEIHEYRRQLQARTIEIEGLRGANESLERQILELEERHSAEVAGYQDSIGQLESDLRNTKSEMARHLREYQDLLNVKMALDIEIAAYRKLLEGEETRFSTSGLSISGLNPLPNPSYLLPPRILSSTTSKVSSAGLSLKKEEEEEEEEEEGASKEVTKKTSKVGESFEETLEETVVSTKKTEKSTIEEITTSSSQKM</sequence>
<gene>
    <name type="primary">Ina</name>
    <name type="synonym">Inexa</name>
</gene>
<organism>
    <name type="scientific">Rattus norvegicus</name>
    <name type="common">Rat</name>
    <dbReference type="NCBI Taxonomy" id="10116"/>
    <lineage>
        <taxon>Eukaryota</taxon>
        <taxon>Metazoa</taxon>
        <taxon>Chordata</taxon>
        <taxon>Craniata</taxon>
        <taxon>Vertebrata</taxon>
        <taxon>Euteleostomi</taxon>
        <taxon>Mammalia</taxon>
        <taxon>Eutheria</taxon>
        <taxon>Euarchontoglires</taxon>
        <taxon>Glires</taxon>
        <taxon>Rodentia</taxon>
        <taxon>Myomorpha</taxon>
        <taxon>Muroidea</taxon>
        <taxon>Muridae</taxon>
        <taxon>Murinae</taxon>
        <taxon>Rattus</taxon>
    </lineage>
</organism>
<dbReference type="EMBL" id="X52017">
    <property type="protein sequence ID" value="CAA36264.1"/>
    <property type="molecule type" value="mRNA"/>
</dbReference>
<dbReference type="EMBL" id="M73049">
    <property type="protein sequence ID" value="AAA41444.1"/>
    <property type="molecule type" value="Genomic_DNA"/>
</dbReference>
<dbReference type="PIR" id="A41023">
    <property type="entry name" value="A41023"/>
</dbReference>
<dbReference type="SMR" id="P23565"/>
<dbReference type="BioGRID" id="246662">
    <property type="interactions" value="8"/>
</dbReference>
<dbReference type="FunCoup" id="P23565">
    <property type="interactions" value="286"/>
</dbReference>
<dbReference type="IntAct" id="P23565">
    <property type="interactions" value="6"/>
</dbReference>
<dbReference type="MINT" id="P23565"/>
<dbReference type="STRING" id="10116.ENSRNOP00000027417"/>
<dbReference type="GlyGen" id="P23565">
    <property type="glycosylation" value="1 site, 1 O-linked glycan (1 site)"/>
</dbReference>
<dbReference type="iPTMnet" id="P23565"/>
<dbReference type="PhosphoSitePlus" id="P23565"/>
<dbReference type="jPOST" id="P23565"/>
<dbReference type="PaxDb" id="10116-ENSRNOP00000027417"/>
<dbReference type="UCSC" id="RGD:2911">
    <property type="organism name" value="rat"/>
</dbReference>
<dbReference type="AGR" id="RGD:2911"/>
<dbReference type="RGD" id="2911">
    <property type="gene designation" value="Ina"/>
</dbReference>
<dbReference type="eggNOG" id="ENOG502RAU0">
    <property type="taxonomic scope" value="Eukaryota"/>
</dbReference>
<dbReference type="InParanoid" id="P23565"/>
<dbReference type="PhylomeDB" id="P23565"/>
<dbReference type="PRO" id="PR:P23565"/>
<dbReference type="Proteomes" id="UP000002494">
    <property type="component" value="Unplaced"/>
</dbReference>
<dbReference type="GO" id="GO:0036464">
    <property type="term" value="C:cytoplasmic ribonucleoprotein granule"/>
    <property type="evidence" value="ECO:0000266"/>
    <property type="project" value="RGD"/>
</dbReference>
<dbReference type="GO" id="GO:0098978">
    <property type="term" value="C:glutamatergic synapse"/>
    <property type="evidence" value="ECO:0000314"/>
    <property type="project" value="SynGO"/>
</dbReference>
<dbReference type="GO" id="GO:0005882">
    <property type="term" value="C:intermediate filament"/>
    <property type="evidence" value="ECO:0000318"/>
    <property type="project" value="GO_Central"/>
</dbReference>
<dbReference type="GO" id="GO:0005883">
    <property type="term" value="C:neurofilament"/>
    <property type="evidence" value="ECO:0000266"/>
    <property type="project" value="RGD"/>
</dbReference>
<dbReference type="GO" id="GO:0098794">
    <property type="term" value="C:postsynapse"/>
    <property type="evidence" value="ECO:0000314"/>
    <property type="project" value="SynGO"/>
</dbReference>
<dbReference type="GO" id="GO:0099092">
    <property type="term" value="C:postsynaptic density, intracellular component"/>
    <property type="evidence" value="ECO:0000314"/>
    <property type="project" value="SynGO"/>
</dbReference>
<dbReference type="GO" id="GO:0099160">
    <property type="term" value="C:postsynaptic intermediate filament cytoskeleton"/>
    <property type="evidence" value="ECO:0000314"/>
    <property type="project" value="SynGO"/>
</dbReference>
<dbReference type="GO" id="GO:0098685">
    <property type="term" value="C:Schaffer collateral - CA1 synapse"/>
    <property type="evidence" value="ECO:0000266"/>
    <property type="project" value="RGD"/>
</dbReference>
<dbReference type="GO" id="GO:0044877">
    <property type="term" value="F:protein-containing complex binding"/>
    <property type="evidence" value="ECO:0000314"/>
    <property type="project" value="RGD"/>
</dbReference>
<dbReference type="GO" id="GO:0099184">
    <property type="term" value="F:structural constituent of postsynaptic intermediate filament cytoskeleton"/>
    <property type="evidence" value="ECO:0000266"/>
    <property type="project" value="RGD"/>
</dbReference>
<dbReference type="GO" id="GO:0030154">
    <property type="term" value="P:cell differentiation"/>
    <property type="evidence" value="ECO:0007669"/>
    <property type="project" value="UniProtKB-KW"/>
</dbReference>
<dbReference type="GO" id="GO:1990830">
    <property type="term" value="P:cellular response to leukemia inhibitory factor"/>
    <property type="evidence" value="ECO:0000266"/>
    <property type="project" value="RGD"/>
</dbReference>
<dbReference type="GO" id="GO:0045104">
    <property type="term" value="P:intermediate filament cytoskeleton organization"/>
    <property type="evidence" value="ECO:0000266"/>
    <property type="project" value="RGD"/>
</dbReference>
<dbReference type="GO" id="GO:0045109">
    <property type="term" value="P:intermediate filament organization"/>
    <property type="evidence" value="ECO:0000318"/>
    <property type="project" value="GO_Central"/>
</dbReference>
<dbReference type="GO" id="GO:0007399">
    <property type="term" value="P:nervous system development"/>
    <property type="evidence" value="ECO:0007669"/>
    <property type="project" value="UniProtKB-KW"/>
</dbReference>
<dbReference type="GO" id="GO:0060052">
    <property type="term" value="P:neurofilament cytoskeleton organization"/>
    <property type="evidence" value="ECO:0000266"/>
    <property type="project" value="RGD"/>
</dbReference>
<dbReference type="GO" id="GO:0099170">
    <property type="term" value="P:postsynaptic modulation of chemical synaptic transmission"/>
    <property type="evidence" value="ECO:0000266"/>
    <property type="project" value="RGD"/>
</dbReference>
<dbReference type="GO" id="GO:0042246">
    <property type="term" value="P:tissue regeneration"/>
    <property type="evidence" value="ECO:0000270"/>
    <property type="project" value="RGD"/>
</dbReference>
<dbReference type="FunFam" id="1.20.5.1160:FF:000001">
    <property type="entry name" value="Keratin type II"/>
    <property type="match status" value="1"/>
</dbReference>
<dbReference type="FunFam" id="1.20.5.170:FF:000002">
    <property type="entry name" value="Type I keratin KA11"/>
    <property type="match status" value="1"/>
</dbReference>
<dbReference type="FunFam" id="1.20.5.500:FF:000001">
    <property type="entry name" value="Type II keratin 23"/>
    <property type="match status" value="1"/>
</dbReference>
<dbReference type="Gene3D" id="1.20.5.170">
    <property type="match status" value="1"/>
</dbReference>
<dbReference type="Gene3D" id="1.20.5.500">
    <property type="entry name" value="Single helix bin"/>
    <property type="match status" value="1"/>
</dbReference>
<dbReference type="Gene3D" id="1.20.5.1160">
    <property type="entry name" value="Vasodilator-stimulated phosphoprotein"/>
    <property type="match status" value="1"/>
</dbReference>
<dbReference type="InterPro" id="IPR018039">
    <property type="entry name" value="IF_conserved"/>
</dbReference>
<dbReference type="InterPro" id="IPR039008">
    <property type="entry name" value="IF_rod_dom"/>
</dbReference>
<dbReference type="InterPro" id="IPR006821">
    <property type="entry name" value="Intermed_filament_DNA-bd"/>
</dbReference>
<dbReference type="InterPro" id="IPR050405">
    <property type="entry name" value="Intermediate_filament"/>
</dbReference>
<dbReference type="PANTHER" id="PTHR45652:SF18">
    <property type="entry name" value="ALPHA-INTERNEXIN"/>
    <property type="match status" value="1"/>
</dbReference>
<dbReference type="PANTHER" id="PTHR45652">
    <property type="entry name" value="GLIAL FIBRILLARY ACIDIC PROTEIN"/>
    <property type="match status" value="1"/>
</dbReference>
<dbReference type="Pfam" id="PF00038">
    <property type="entry name" value="Filament"/>
    <property type="match status" value="1"/>
</dbReference>
<dbReference type="Pfam" id="PF04732">
    <property type="entry name" value="Filament_head"/>
    <property type="match status" value="1"/>
</dbReference>
<dbReference type="SMART" id="SM01391">
    <property type="entry name" value="Filament"/>
    <property type="match status" value="1"/>
</dbReference>
<dbReference type="SUPFAM" id="SSF64593">
    <property type="entry name" value="Intermediate filament protein, coiled coil region"/>
    <property type="match status" value="2"/>
</dbReference>
<dbReference type="SUPFAM" id="SSF90257">
    <property type="entry name" value="Myosin rod fragments"/>
    <property type="match status" value="1"/>
</dbReference>
<dbReference type="PROSITE" id="PS00226">
    <property type="entry name" value="IF_ROD_1"/>
    <property type="match status" value="1"/>
</dbReference>
<dbReference type="PROSITE" id="PS51842">
    <property type="entry name" value="IF_ROD_2"/>
    <property type="match status" value="1"/>
</dbReference>
<evidence type="ECO:0000250" key="1"/>
<evidence type="ECO:0000250" key="2">
    <source>
        <dbReference type="UniProtKB" id="P46660"/>
    </source>
</evidence>
<evidence type="ECO:0000250" key="3">
    <source>
        <dbReference type="UniProtKB" id="Q16352"/>
    </source>
</evidence>
<evidence type="ECO:0000255" key="4">
    <source>
        <dbReference type="PROSITE-ProRule" id="PRU01188"/>
    </source>
</evidence>
<evidence type="ECO:0000256" key="5">
    <source>
        <dbReference type="SAM" id="MobiDB-lite"/>
    </source>
</evidence>
<evidence type="ECO:0000269" key="6">
    <source>
    </source>
</evidence>
<evidence type="ECO:0000305" key="7"/>
<evidence type="ECO:0007744" key="8">
    <source>
    </source>
</evidence>
<comment type="function">
    <text evidence="1 2">Class-IV neuronal intermediate filament that is able to self-assemble. It is involved in the morphogenesis of neurons. It may form an independent structural network without the involvement of other neurofilaments or it may cooperate with NEFL to form the filamentous backbone to which NEFM and NEFH attach to form the cross-bridges (By similarity). May also cooperate with the neuronal intermediate filament protein PRPH to form filamentous networks (By similarity).</text>
</comment>
<comment type="subunit">
    <text evidence="6">Forms homodimers (in vitro) (PubMed:9388258). Forms heterodimers with NEFL, NEFM or NEFH (in vitro) (PubMed:9388258).</text>
</comment>
<comment type="interaction">
    <interactant intactId="EBI-6899875">
        <id>P23565</id>
    </interactant>
    <interactant intactId="EBI-6899705">
        <id>Q9EPI6</id>
        <label>Nsmf</label>
    </interactant>
    <organismsDiffer>false</organismsDiffer>
    <experiments>5</experiments>
</comment>
<comment type="tissue specificity">
    <text evidence="6">Expressed in the dorsal root ganglion neurons (at protein level).</text>
</comment>
<comment type="developmental stage">
    <text>Levels of this protein reach a maximum at embryonic day 16 and decline into adulthood.</text>
</comment>
<comment type="PTM">
    <text evidence="1">O-glycosylated.</text>
</comment>
<comment type="similarity">
    <text evidence="4">Belongs to the intermediate filament family.</text>
</comment>